<name>MRKB_DICDI</name>
<proteinExistence type="inferred from homology"/>
<evidence type="ECO:0000255" key="1">
    <source>
        <dbReference type="PROSITE-ProRule" id="PRU00159"/>
    </source>
</evidence>
<evidence type="ECO:0000255" key="2">
    <source>
        <dbReference type="PROSITE-ProRule" id="PRU00565"/>
    </source>
</evidence>
<evidence type="ECO:0000255" key="3">
    <source>
        <dbReference type="PROSITE-ProRule" id="PRU10027"/>
    </source>
</evidence>
<evidence type="ECO:0000256" key="4">
    <source>
        <dbReference type="SAM" id="MobiDB-lite"/>
    </source>
</evidence>
<evidence type="ECO:0000305" key="5"/>
<accession>Q54MV2</accession>
<feature type="chain" id="PRO_0000338410" description="Probable serine/threonine-protein kinase MARK-B">
    <location>
        <begin position="1"/>
        <end position="715"/>
    </location>
</feature>
<feature type="domain" description="Protein kinase" evidence="1">
    <location>
        <begin position="65"/>
        <end position="320"/>
    </location>
</feature>
<feature type="domain" description="KA1" evidence="2">
    <location>
        <begin position="666"/>
        <end position="715"/>
    </location>
</feature>
<feature type="region of interest" description="Disordered" evidence="4">
    <location>
        <begin position="24"/>
        <end position="65"/>
    </location>
</feature>
<feature type="region of interest" description="Disordered" evidence="4">
    <location>
        <begin position="335"/>
        <end position="399"/>
    </location>
</feature>
<feature type="region of interest" description="Disordered" evidence="4">
    <location>
        <begin position="446"/>
        <end position="530"/>
    </location>
</feature>
<feature type="compositionally biased region" description="Low complexity" evidence="4">
    <location>
        <begin position="24"/>
        <end position="37"/>
    </location>
</feature>
<feature type="compositionally biased region" description="Basic and acidic residues" evidence="4">
    <location>
        <begin position="335"/>
        <end position="344"/>
    </location>
</feature>
<feature type="compositionally biased region" description="Low complexity" evidence="4">
    <location>
        <begin position="345"/>
        <end position="368"/>
    </location>
</feature>
<feature type="compositionally biased region" description="Polar residues" evidence="4">
    <location>
        <begin position="381"/>
        <end position="399"/>
    </location>
</feature>
<feature type="compositionally biased region" description="Low complexity" evidence="4">
    <location>
        <begin position="451"/>
        <end position="478"/>
    </location>
</feature>
<feature type="compositionally biased region" description="Low complexity" evidence="4">
    <location>
        <begin position="487"/>
        <end position="513"/>
    </location>
</feature>
<feature type="compositionally biased region" description="Basic residues" evidence="4">
    <location>
        <begin position="517"/>
        <end position="527"/>
    </location>
</feature>
<feature type="active site" description="Proton acceptor" evidence="1 3">
    <location>
        <position position="187"/>
    </location>
</feature>
<feature type="binding site" evidence="1">
    <location>
        <begin position="71"/>
        <end position="79"/>
    </location>
    <ligand>
        <name>ATP</name>
        <dbReference type="ChEBI" id="CHEBI:30616"/>
    </ligand>
</feature>
<feature type="binding site" evidence="1">
    <location>
        <position position="94"/>
    </location>
    <ligand>
        <name>ATP</name>
        <dbReference type="ChEBI" id="CHEBI:30616"/>
    </ligand>
</feature>
<organism>
    <name type="scientific">Dictyostelium discoideum</name>
    <name type="common">Social amoeba</name>
    <dbReference type="NCBI Taxonomy" id="44689"/>
    <lineage>
        <taxon>Eukaryota</taxon>
        <taxon>Amoebozoa</taxon>
        <taxon>Evosea</taxon>
        <taxon>Eumycetozoa</taxon>
        <taxon>Dictyostelia</taxon>
        <taxon>Dictyosteliales</taxon>
        <taxon>Dictyosteliaceae</taxon>
        <taxon>Dictyostelium</taxon>
    </lineage>
</organism>
<reference key="1">
    <citation type="journal article" date="2005" name="Nature">
        <title>The genome of the social amoeba Dictyostelium discoideum.</title>
        <authorList>
            <person name="Eichinger L."/>
            <person name="Pachebat J.A."/>
            <person name="Gloeckner G."/>
            <person name="Rajandream M.A."/>
            <person name="Sucgang R."/>
            <person name="Berriman M."/>
            <person name="Song J."/>
            <person name="Olsen R."/>
            <person name="Szafranski K."/>
            <person name="Xu Q."/>
            <person name="Tunggal B."/>
            <person name="Kummerfeld S."/>
            <person name="Madera M."/>
            <person name="Konfortov B.A."/>
            <person name="Rivero F."/>
            <person name="Bankier A.T."/>
            <person name="Lehmann R."/>
            <person name="Hamlin N."/>
            <person name="Davies R."/>
            <person name="Gaudet P."/>
            <person name="Fey P."/>
            <person name="Pilcher K."/>
            <person name="Chen G."/>
            <person name="Saunders D."/>
            <person name="Sodergren E.J."/>
            <person name="Davis P."/>
            <person name="Kerhornou A."/>
            <person name="Nie X."/>
            <person name="Hall N."/>
            <person name="Anjard C."/>
            <person name="Hemphill L."/>
            <person name="Bason N."/>
            <person name="Farbrother P."/>
            <person name="Desany B."/>
            <person name="Just E."/>
            <person name="Morio T."/>
            <person name="Rost R."/>
            <person name="Churcher C.M."/>
            <person name="Cooper J."/>
            <person name="Haydock S."/>
            <person name="van Driessche N."/>
            <person name="Cronin A."/>
            <person name="Goodhead I."/>
            <person name="Muzny D.M."/>
            <person name="Mourier T."/>
            <person name="Pain A."/>
            <person name="Lu M."/>
            <person name="Harper D."/>
            <person name="Lindsay R."/>
            <person name="Hauser H."/>
            <person name="James K.D."/>
            <person name="Quiles M."/>
            <person name="Madan Babu M."/>
            <person name="Saito T."/>
            <person name="Buchrieser C."/>
            <person name="Wardroper A."/>
            <person name="Felder M."/>
            <person name="Thangavelu M."/>
            <person name="Johnson D."/>
            <person name="Knights A."/>
            <person name="Loulseged H."/>
            <person name="Mungall K.L."/>
            <person name="Oliver K."/>
            <person name="Price C."/>
            <person name="Quail M.A."/>
            <person name="Urushihara H."/>
            <person name="Hernandez J."/>
            <person name="Rabbinowitsch E."/>
            <person name="Steffen D."/>
            <person name="Sanders M."/>
            <person name="Ma J."/>
            <person name="Kohara Y."/>
            <person name="Sharp S."/>
            <person name="Simmonds M.N."/>
            <person name="Spiegler S."/>
            <person name="Tivey A."/>
            <person name="Sugano S."/>
            <person name="White B."/>
            <person name="Walker D."/>
            <person name="Woodward J.R."/>
            <person name="Winckler T."/>
            <person name="Tanaka Y."/>
            <person name="Shaulsky G."/>
            <person name="Schleicher M."/>
            <person name="Weinstock G.M."/>
            <person name="Rosenthal A."/>
            <person name="Cox E.C."/>
            <person name="Chisholm R.L."/>
            <person name="Gibbs R.A."/>
            <person name="Loomis W.F."/>
            <person name="Platzer M."/>
            <person name="Kay R.R."/>
            <person name="Williams J.G."/>
            <person name="Dear P.H."/>
            <person name="Noegel A.A."/>
            <person name="Barrell B.G."/>
            <person name="Kuspa A."/>
        </authorList>
    </citation>
    <scope>NUCLEOTIDE SEQUENCE [LARGE SCALE GENOMIC DNA]</scope>
    <source>
        <strain>AX4</strain>
    </source>
</reference>
<dbReference type="EC" id="2.7.11.1"/>
<dbReference type="EMBL" id="AAFI02000079">
    <property type="protein sequence ID" value="EAL64659.1"/>
    <property type="molecule type" value="Genomic_DNA"/>
</dbReference>
<dbReference type="RefSeq" id="XP_638191.1">
    <property type="nucleotide sequence ID" value="XM_633099.1"/>
</dbReference>
<dbReference type="SMR" id="Q54MV2"/>
<dbReference type="STRING" id="44689.Q54MV2"/>
<dbReference type="PaxDb" id="44689-DDB0216238"/>
<dbReference type="EnsemblProtists" id="EAL64659">
    <property type="protein sequence ID" value="EAL64659"/>
    <property type="gene ID" value="DDB_G0285643"/>
</dbReference>
<dbReference type="GeneID" id="8625237"/>
<dbReference type="KEGG" id="ddi:DDB_G0285643"/>
<dbReference type="dictyBase" id="DDB_G0285643">
    <property type="gene designation" value="mrkB"/>
</dbReference>
<dbReference type="VEuPathDB" id="AmoebaDB:DDB_G0285643"/>
<dbReference type="eggNOG" id="KOG0583">
    <property type="taxonomic scope" value="Eukaryota"/>
</dbReference>
<dbReference type="eggNOG" id="KOG0586">
    <property type="taxonomic scope" value="Eukaryota"/>
</dbReference>
<dbReference type="HOGENOM" id="CLU_386591_0_0_1"/>
<dbReference type="InParanoid" id="Q54MV2"/>
<dbReference type="OMA" id="INRMIVA"/>
<dbReference type="Reactome" id="R-DDI-1632852">
    <property type="pathway name" value="Macroautophagy"/>
</dbReference>
<dbReference type="Reactome" id="R-DDI-380972">
    <property type="pathway name" value="Energy dependent regulation of mTOR by LKB1-AMPK"/>
</dbReference>
<dbReference type="Reactome" id="R-DDI-5628897">
    <property type="pathway name" value="TP53 Regulates Metabolic Genes"/>
</dbReference>
<dbReference type="PRO" id="PR:Q54MV2"/>
<dbReference type="Proteomes" id="UP000002195">
    <property type="component" value="Chromosome 4"/>
</dbReference>
<dbReference type="GO" id="GO:0005524">
    <property type="term" value="F:ATP binding"/>
    <property type="evidence" value="ECO:0007669"/>
    <property type="project" value="UniProtKB-KW"/>
</dbReference>
<dbReference type="GO" id="GO:0106310">
    <property type="term" value="F:protein serine kinase activity"/>
    <property type="evidence" value="ECO:0007669"/>
    <property type="project" value="RHEA"/>
</dbReference>
<dbReference type="GO" id="GO:0004674">
    <property type="term" value="F:protein serine/threonine kinase activity"/>
    <property type="evidence" value="ECO:0000250"/>
    <property type="project" value="dictyBase"/>
</dbReference>
<dbReference type="GO" id="GO:0006468">
    <property type="term" value="P:protein phosphorylation"/>
    <property type="evidence" value="ECO:0000250"/>
    <property type="project" value="dictyBase"/>
</dbReference>
<dbReference type="CDD" id="cd12121">
    <property type="entry name" value="MARK_C_like"/>
    <property type="match status" value="1"/>
</dbReference>
<dbReference type="CDD" id="cd14003">
    <property type="entry name" value="STKc_AMPK-like"/>
    <property type="match status" value="1"/>
</dbReference>
<dbReference type="FunFam" id="1.10.510.10:FF:000571">
    <property type="entry name" value="Maternal embryonic leucine zipper kinase"/>
    <property type="match status" value="1"/>
</dbReference>
<dbReference type="FunFam" id="3.30.310.80:FF:000030">
    <property type="entry name" value="Probable serine/threonine-protein kinase MARK-B"/>
    <property type="match status" value="1"/>
</dbReference>
<dbReference type="Gene3D" id="3.30.310.80">
    <property type="entry name" value="Kinase associated domain 1, KA1"/>
    <property type="match status" value="1"/>
</dbReference>
<dbReference type="Gene3D" id="1.10.510.10">
    <property type="entry name" value="Transferase(Phosphotransferase) domain 1"/>
    <property type="match status" value="1"/>
</dbReference>
<dbReference type="InterPro" id="IPR028375">
    <property type="entry name" value="KA1/Ssp2_C"/>
</dbReference>
<dbReference type="InterPro" id="IPR001772">
    <property type="entry name" value="KA1_dom"/>
</dbReference>
<dbReference type="InterPro" id="IPR011009">
    <property type="entry name" value="Kinase-like_dom_sf"/>
</dbReference>
<dbReference type="InterPro" id="IPR000719">
    <property type="entry name" value="Prot_kinase_dom"/>
</dbReference>
<dbReference type="InterPro" id="IPR017441">
    <property type="entry name" value="Protein_kinase_ATP_BS"/>
</dbReference>
<dbReference type="InterPro" id="IPR008271">
    <property type="entry name" value="Ser/Thr_kinase_AS"/>
</dbReference>
<dbReference type="PANTHER" id="PTHR24346">
    <property type="entry name" value="MAP/MICROTUBULE AFFINITY-REGULATING KINASE"/>
    <property type="match status" value="1"/>
</dbReference>
<dbReference type="PANTHER" id="PTHR24346:SF107">
    <property type="entry name" value="SERINE_THREONINE-PROTEIN KINASE CHK1"/>
    <property type="match status" value="1"/>
</dbReference>
<dbReference type="Pfam" id="PF02149">
    <property type="entry name" value="KA1"/>
    <property type="match status" value="1"/>
</dbReference>
<dbReference type="Pfam" id="PF00069">
    <property type="entry name" value="Pkinase"/>
    <property type="match status" value="1"/>
</dbReference>
<dbReference type="SMART" id="SM00220">
    <property type="entry name" value="S_TKc"/>
    <property type="match status" value="1"/>
</dbReference>
<dbReference type="SUPFAM" id="SSF103243">
    <property type="entry name" value="KA1-like"/>
    <property type="match status" value="1"/>
</dbReference>
<dbReference type="SUPFAM" id="SSF56112">
    <property type="entry name" value="Protein kinase-like (PK-like)"/>
    <property type="match status" value="1"/>
</dbReference>
<dbReference type="PROSITE" id="PS50032">
    <property type="entry name" value="KA1"/>
    <property type="match status" value="1"/>
</dbReference>
<dbReference type="PROSITE" id="PS00107">
    <property type="entry name" value="PROTEIN_KINASE_ATP"/>
    <property type="match status" value="1"/>
</dbReference>
<dbReference type="PROSITE" id="PS50011">
    <property type="entry name" value="PROTEIN_KINASE_DOM"/>
    <property type="match status" value="1"/>
</dbReference>
<dbReference type="PROSITE" id="PS00108">
    <property type="entry name" value="PROTEIN_KINASE_ST"/>
    <property type="match status" value="1"/>
</dbReference>
<comment type="catalytic activity">
    <reaction>
        <text>L-seryl-[protein] + ATP = O-phospho-L-seryl-[protein] + ADP + H(+)</text>
        <dbReference type="Rhea" id="RHEA:17989"/>
        <dbReference type="Rhea" id="RHEA-COMP:9863"/>
        <dbReference type="Rhea" id="RHEA-COMP:11604"/>
        <dbReference type="ChEBI" id="CHEBI:15378"/>
        <dbReference type="ChEBI" id="CHEBI:29999"/>
        <dbReference type="ChEBI" id="CHEBI:30616"/>
        <dbReference type="ChEBI" id="CHEBI:83421"/>
        <dbReference type="ChEBI" id="CHEBI:456216"/>
        <dbReference type="EC" id="2.7.11.1"/>
    </reaction>
</comment>
<comment type="catalytic activity">
    <reaction>
        <text>L-threonyl-[protein] + ATP = O-phospho-L-threonyl-[protein] + ADP + H(+)</text>
        <dbReference type="Rhea" id="RHEA:46608"/>
        <dbReference type="Rhea" id="RHEA-COMP:11060"/>
        <dbReference type="Rhea" id="RHEA-COMP:11605"/>
        <dbReference type="ChEBI" id="CHEBI:15378"/>
        <dbReference type="ChEBI" id="CHEBI:30013"/>
        <dbReference type="ChEBI" id="CHEBI:30616"/>
        <dbReference type="ChEBI" id="CHEBI:61977"/>
        <dbReference type="ChEBI" id="CHEBI:456216"/>
        <dbReference type="EC" id="2.7.11.1"/>
    </reaction>
</comment>
<comment type="similarity">
    <text evidence="5">Belongs to the protein kinase superfamily. CAMK Ser/Thr protein kinase family. SNF1 subfamily.</text>
</comment>
<gene>
    <name type="primary">mrkB</name>
    <name type="ORF">DDB_G0285643</name>
</gene>
<sequence>MATAVSSYNDIQLETIQEVSCSTSCSSNSTTSSSSNSPKQNKVSPGYRNKPQQQQHKKGHKMGNYLLGKTIGSGTSSKVKIGTNILTGKQYAIKITKPKRIKERKEIEREISILKRLKHDNIIQLHDAIYEDDVGRICLILELVSGGELFDYIVARGRLSEKEGRKFFRQMLCGLIYCHSNMVCHRDLKLENLLVDEDGNLKISDFGYSNIIKPGNLLSTFCGSPVYAPPEILLEKRYNGNEVDIWSMGVILYAMVTGQLPWTLTDGVQVEGMDRLLRGEFKYPSHVILSDDVKDLINRMIVAEPVERATLDEIKTHVWVNKGYDMEPDQEYNKKVSDRLEKEQQQQTPQHQQTQQQLQPQSQLQQHSPRSPKPLFVDTIIGSNRPLNQSSPNLTIPQNKQYVSSNSNINININNNNNNNSNVINNSIKPIQFNSSSCLDEKKINCSAPTSPHSISPQFISPSPSTSTTPPLSPLSVSGQRSPPTFSSNPNIGHIPNNNHNSLSSSQNNINTSGKNQYHHHHHHQNHHSTSLFHNIFKKRQSVTSVSANSSPVIVSSNGGLNNNNHNNILHVSSSNINVDGASASAPQFSSSSSKRRFSLEDIVKAITIRSGKGKNPKIRSMKGPFNSGTTTMLNPIQLIEHIEENLNSTQISYRRNFYVFDCKTLCPRNETINFEIEVCKVNGMDMYGIKFKRLSGDAWSYSSSCIKIVESLKL</sequence>
<protein>
    <recommendedName>
        <fullName>Probable serine/threonine-protein kinase MARK-B</fullName>
        <ecNumber>2.7.11.1</ecNumber>
    </recommendedName>
</protein>
<keyword id="KW-0067">ATP-binding</keyword>
<keyword id="KW-0418">Kinase</keyword>
<keyword id="KW-0547">Nucleotide-binding</keyword>
<keyword id="KW-1185">Reference proteome</keyword>
<keyword id="KW-0723">Serine/threonine-protein kinase</keyword>
<keyword id="KW-0808">Transferase</keyword>